<keyword id="KW-0004">4Fe-4S</keyword>
<keyword id="KW-0408">Iron</keyword>
<keyword id="KW-0411">Iron-sulfur</keyword>
<keyword id="KW-0479">Metal-binding</keyword>
<keyword id="KW-0496">Mitochondrion</keyword>
<keyword id="KW-1185">Reference proteome</keyword>
<keyword id="KW-0949">S-adenosyl-L-methionine</keyword>
<keyword id="KW-0808">Transferase</keyword>
<reference key="1">
    <citation type="journal article" date="2007" name="Nat. Genet.">
        <title>Comparative genomic analysis of three Leishmania species that cause diverse human disease.</title>
        <authorList>
            <person name="Peacock C.S."/>
            <person name="Seeger K."/>
            <person name="Harris D."/>
            <person name="Murphy L."/>
            <person name="Ruiz J.C."/>
            <person name="Quail M.A."/>
            <person name="Peters N."/>
            <person name="Adlem E."/>
            <person name="Tivey A."/>
            <person name="Aslett M."/>
            <person name="Kerhornou A."/>
            <person name="Ivens A."/>
            <person name="Fraser A."/>
            <person name="Rajandream M.-A."/>
            <person name="Carver T."/>
            <person name="Norbertczak H."/>
            <person name="Chillingworth T."/>
            <person name="Hance Z."/>
            <person name="Jagels K."/>
            <person name="Moule S."/>
            <person name="Ormond D."/>
            <person name="Rutter S."/>
            <person name="Sqaures R."/>
            <person name="Whitehead S."/>
            <person name="Rabbinowitsch E."/>
            <person name="Arrowsmith C."/>
            <person name="White B."/>
            <person name="Thurston S."/>
            <person name="Bringaud F."/>
            <person name="Baldauf S.L."/>
            <person name="Faulconbridge A."/>
            <person name="Jeffares D."/>
            <person name="Depledge D.P."/>
            <person name="Oyola S.O."/>
            <person name="Hilley J.D."/>
            <person name="Brito L.O."/>
            <person name="Tosi L.R.O."/>
            <person name="Barrell B."/>
            <person name="Cruz A.K."/>
            <person name="Mottram J.C."/>
            <person name="Smith D.F."/>
            <person name="Berriman M."/>
        </authorList>
    </citation>
    <scope>NUCLEOTIDE SEQUENCE [LARGE SCALE GENOMIC DNA]</scope>
    <source>
        <strain>JPCM5</strain>
    </source>
</reference>
<protein>
    <recommendedName>
        <fullName evidence="1">Lipoyl synthase, mitochondrial</fullName>
        <ecNumber evidence="1">2.8.1.8</ecNumber>
    </recommendedName>
    <alternativeName>
        <fullName evidence="1">Lipoate synthase</fullName>
        <shortName evidence="1">LS</shortName>
        <shortName evidence="1">Lip-syn</shortName>
    </alternativeName>
    <alternativeName>
        <fullName evidence="1">Lipoic acid synthase</fullName>
    </alternativeName>
</protein>
<gene>
    <name type="ORF">LinJ19.0190</name>
    <name type="ORF">LinJ_19_0350</name>
</gene>
<dbReference type="EC" id="2.8.1.8" evidence="1"/>
<dbReference type="EMBL" id="FR796451">
    <property type="protein sequence ID" value="CAM67240.1"/>
    <property type="molecule type" value="Genomic_DNA"/>
</dbReference>
<dbReference type="RefSeq" id="XP_001464998.1">
    <property type="nucleotide sequence ID" value="XM_001464961.1"/>
</dbReference>
<dbReference type="SMR" id="A4HY57"/>
<dbReference type="FunCoup" id="A4HY57">
    <property type="interactions" value="205"/>
</dbReference>
<dbReference type="STRING" id="5671.A4HY57"/>
<dbReference type="GeneID" id="5068408"/>
<dbReference type="KEGG" id="lif:LINJ_19_0350"/>
<dbReference type="VEuPathDB" id="TriTrypDB:LINF_190008400"/>
<dbReference type="eggNOG" id="KOG2672">
    <property type="taxonomic scope" value="Eukaryota"/>
</dbReference>
<dbReference type="InParanoid" id="A4HY57"/>
<dbReference type="OMA" id="PYCDIDF"/>
<dbReference type="UniPathway" id="UPA00538">
    <property type="reaction ID" value="UER00593"/>
</dbReference>
<dbReference type="Proteomes" id="UP000008153">
    <property type="component" value="Chromosome 19"/>
</dbReference>
<dbReference type="GO" id="GO:0005739">
    <property type="term" value="C:mitochondrion"/>
    <property type="evidence" value="ECO:0007669"/>
    <property type="project" value="UniProtKB-SubCell"/>
</dbReference>
<dbReference type="GO" id="GO:0051539">
    <property type="term" value="F:4 iron, 4 sulfur cluster binding"/>
    <property type="evidence" value="ECO:0007669"/>
    <property type="project" value="UniProtKB-UniRule"/>
</dbReference>
<dbReference type="GO" id="GO:0016992">
    <property type="term" value="F:lipoate synthase activity"/>
    <property type="evidence" value="ECO:0007669"/>
    <property type="project" value="UniProtKB-UniRule"/>
</dbReference>
<dbReference type="GO" id="GO:0046872">
    <property type="term" value="F:metal ion binding"/>
    <property type="evidence" value="ECO:0007669"/>
    <property type="project" value="UniProtKB-KW"/>
</dbReference>
<dbReference type="FunFam" id="3.20.20.70:FF:000306">
    <property type="entry name" value="Lipoyl synthase, mitochondrial"/>
    <property type="match status" value="1"/>
</dbReference>
<dbReference type="Gene3D" id="3.20.20.70">
    <property type="entry name" value="Aldolase class I"/>
    <property type="match status" value="1"/>
</dbReference>
<dbReference type="HAMAP" id="MF_00206">
    <property type="entry name" value="Lipoyl_synth"/>
    <property type="match status" value="1"/>
</dbReference>
<dbReference type="InterPro" id="IPR013785">
    <property type="entry name" value="Aldolase_TIM"/>
</dbReference>
<dbReference type="InterPro" id="IPR006638">
    <property type="entry name" value="Elp3/MiaA/NifB-like_rSAM"/>
</dbReference>
<dbReference type="InterPro" id="IPR031691">
    <property type="entry name" value="LIAS_N"/>
</dbReference>
<dbReference type="InterPro" id="IPR003698">
    <property type="entry name" value="Lipoyl_synth"/>
</dbReference>
<dbReference type="InterPro" id="IPR007197">
    <property type="entry name" value="rSAM"/>
</dbReference>
<dbReference type="NCBIfam" id="TIGR00510">
    <property type="entry name" value="lipA"/>
    <property type="match status" value="1"/>
</dbReference>
<dbReference type="NCBIfam" id="NF004019">
    <property type="entry name" value="PRK05481.1"/>
    <property type="match status" value="1"/>
</dbReference>
<dbReference type="NCBIfam" id="NF009544">
    <property type="entry name" value="PRK12928.1"/>
    <property type="match status" value="1"/>
</dbReference>
<dbReference type="PANTHER" id="PTHR10949">
    <property type="entry name" value="LIPOYL SYNTHASE"/>
    <property type="match status" value="1"/>
</dbReference>
<dbReference type="PANTHER" id="PTHR10949:SF0">
    <property type="entry name" value="LIPOYL SYNTHASE, MITOCHONDRIAL"/>
    <property type="match status" value="1"/>
</dbReference>
<dbReference type="Pfam" id="PF16881">
    <property type="entry name" value="LIAS_N"/>
    <property type="match status" value="1"/>
</dbReference>
<dbReference type="Pfam" id="PF04055">
    <property type="entry name" value="Radical_SAM"/>
    <property type="match status" value="1"/>
</dbReference>
<dbReference type="SFLD" id="SFLDF00271">
    <property type="entry name" value="lipoyl_synthase"/>
    <property type="match status" value="1"/>
</dbReference>
<dbReference type="SFLD" id="SFLDG01058">
    <property type="entry name" value="lipoyl_synthase_like"/>
    <property type="match status" value="1"/>
</dbReference>
<dbReference type="SMART" id="SM00729">
    <property type="entry name" value="Elp3"/>
    <property type="match status" value="1"/>
</dbReference>
<dbReference type="SUPFAM" id="SSF102114">
    <property type="entry name" value="Radical SAM enzymes"/>
    <property type="match status" value="1"/>
</dbReference>
<dbReference type="PROSITE" id="PS51918">
    <property type="entry name" value="RADICAL_SAM"/>
    <property type="match status" value="1"/>
</dbReference>
<sequence>MCLTAAPSRVSPVAAAAAAAADVAGSSESTVNLMADVDKKDPQYKQIFLERFRKKLQSDKTGMNDLESFVELPEGVAPSAASIGPIKRGSEPLPPWLKLKVPKGMTHRPRFNRIRRSMREKNLSTVCEEAKCPNIGECWGGSDDEGTATATIMVMGSHCTRGCRFCSVLTSRRPPPLDPEEPEKVAAAVHEMGVDYIVMTMVDRDDLPDGGASHVCRCIHTIKEKNPALMLEALVGDFHGDLKLVEQLAVTPLSVYAHNIECVERITPRVRDRRASYKQSLQTLEHVTKSTNGKMLTKSSIMLGLGEEEKEVRQTLRDLRTAGVSAVTLGQYLQPSRTRLKVSRYAHPKEFEMWEKEAMDMGFLYCASGPMVRSSYRAGEYYIKSILKQRQSAEGGKATAAATAANAGAAIA</sequence>
<proteinExistence type="inferred from homology"/>
<evidence type="ECO:0000255" key="1">
    <source>
        <dbReference type="HAMAP-Rule" id="MF_03123"/>
    </source>
</evidence>
<evidence type="ECO:0000255" key="2">
    <source>
        <dbReference type="PROSITE-ProRule" id="PRU01266"/>
    </source>
</evidence>
<organism>
    <name type="scientific">Leishmania infantum</name>
    <dbReference type="NCBI Taxonomy" id="5671"/>
    <lineage>
        <taxon>Eukaryota</taxon>
        <taxon>Discoba</taxon>
        <taxon>Euglenozoa</taxon>
        <taxon>Kinetoplastea</taxon>
        <taxon>Metakinetoplastina</taxon>
        <taxon>Trypanosomatida</taxon>
        <taxon>Trypanosomatidae</taxon>
        <taxon>Leishmaniinae</taxon>
        <taxon>Leishmania</taxon>
    </lineage>
</organism>
<feature type="chain" id="PRO_0000398237" description="Lipoyl synthase, mitochondrial">
    <location>
        <begin position="1"/>
        <end position="412"/>
    </location>
</feature>
<feature type="domain" description="Radical SAM core" evidence="2">
    <location>
        <begin position="142"/>
        <end position="364"/>
    </location>
</feature>
<feature type="binding site" evidence="1">
    <location>
        <position position="127"/>
    </location>
    <ligand>
        <name>[4Fe-4S] cluster</name>
        <dbReference type="ChEBI" id="CHEBI:49883"/>
        <label>1</label>
    </ligand>
</feature>
<feature type="binding site" evidence="1">
    <location>
        <position position="132"/>
    </location>
    <ligand>
        <name>[4Fe-4S] cluster</name>
        <dbReference type="ChEBI" id="CHEBI:49883"/>
        <label>1</label>
    </ligand>
</feature>
<feature type="binding site" evidence="1">
    <location>
        <position position="138"/>
    </location>
    <ligand>
        <name>[4Fe-4S] cluster</name>
        <dbReference type="ChEBI" id="CHEBI:49883"/>
        <label>1</label>
    </ligand>
</feature>
<feature type="binding site" evidence="1">
    <location>
        <position position="159"/>
    </location>
    <ligand>
        <name>[4Fe-4S] cluster</name>
        <dbReference type="ChEBI" id="CHEBI:49883"/>
        <label>2</label>
        <note>4Fe-4S-S-AdoMet</note>
    </ligand>
</feature>
<feature type="binding site" evidence="1">
    <location>
        <position position="163"/>
    </location>
    <ligand>
        <name>[4Fe-4S] cluster</name>
        <dbReference type="ChEBI" id="CHEBI:49883"/>
        <label>2</label>
        <note>4Fe-4S-S-AdoMet</note>
    </ligand>
</feature>
<feature type="binding site" evidence="1">
    <location>
        <position position="166"/>
    </location>
    <ligand>
        <name>[4Fe-4S] cluster</name>
        <dbReference type="ChEBI" id="CHEBI:49883"/>
        <label>2</label>
        <note>4Fe-4S-S-AdoMet</note>
    </ligand>
</feature>
<feature type="binding site" evidence="1">
    <location>
        <position position="375"/>
    </location>
    <ligand>
        <name>[4Fe-4S] cluster</name>
        <dbReference type="ChEBI" id="CHEBI:49883"/>
        <label>1</label>
    </ligand>
</feature>
<accession>A4HY57</accession>
<comment type="function">
    <text evidence="1">Catalyzes the radical-mediated insertion of two sulfur atoms into the C-6 and C-8 positions of the octanoyl moiety bound to the lipoyl domains of lipoate-dependent enzymes, thereby converting the octanoylated domains into lipoylated derivatives.</text>
</comment>
<comment type="catalytic activity">
    <reaction evidence="1">
        <text>[[Fe-S] cluster scaffold protein carrying a second [4Fe-4S](2+) cluster] + N(6)-octanoyl-L-lysyl-[protein] + 2 oxidized [2Fe-2S]-[ferredoxin] + 2 S-adenosyl-L-methionine + 4 H(+) = [[Fe-S] cluster scaffold protein] + N(6)-[(R)-dihydrolipoyl]-L-lysyl-[protein] + 4 Fe(3+) + 2 hydrogen sulfide + 2 5'-deoxyadenosine + 2 L-methionine + 2 reduced [2Fe-2S]-[ferredoxin]</text>
        <dbReference type="Rhea" id="RHEA:16585"/>
        <dbReference type="Rhea" id="RHEA-COMP:9928"/>
        <dbReference type="Rhea" id="RHEA-COMP:10000"/>
        <dbReference type="Rhea" id="RHEA-COMP:10001"/>
        <dbReference type="Rhea" id="RHEA-COMP:10475"/>
        <dbReference type="Rhea" id="RHEA-COMP:14568"/>
        <dbReference type="Rhea" id="RHEA-COMP:14569"/>
        <dbReference type="ChEBI" id="CHEBI:15378"/>
        <dbReference type="ChEBI" id="CHEBI:17319"/>
        <dbReference type="ChEBI" id="CHEBI:29034"/>
        <dbReference type="ChEBI" id="CHEBI:29919"/>
        <dbReference type="ChEBI" id="CHEBI:33722"/>
        <dbReference type="ChEBI" id="CHEBI:33737"/>
        <dbReference type="ChEBI" id="CHEBI:33738"/>
        <dbReference type="ChEBI" id="CHEBI:57844"/>
        <dbReference type="ChEBI" id="CHEBI:59789"/>
        <dbReference type="ChEBI" id="CHEBI:78809"/>
        <dbReference type="ChEBI" id="CHEBI:83100"/>
        <dbReference type="EC" id="2.8.1.8"/>
    </reaction>
</comment>
<comment type="cofactor">
    <cofactor evidence="1">
        <name>[4Fe-4S] cluster</name>
        <dbReference type="ChEBI" id="CHEBI:49883"/>
    </cofactor>
    <text evidence="1">Binds 2 [4Fe-4S] clusters per subunit. One cluster is coordinated with 3 cysteines and an exchangeable S-adenosyl-L-methionine.</text>
</comment>
<comment type="pathway">
    <text evidence="1">Protein modification; protein lipoylation via endogenous pathway; protein N(6)-(lipoyl)lysine from octanoyl-[acyl-carrier-protein]: step 2/2.</text>
</comment>
<comment type="subcellular location">
    <subcellularLocation>
        <location evidence="1">Mitochondrion</location>
    </subcellularLocation>
</comment>
<comment type="miscellaneous">
    <text evidence="1">This protein may be expected to contain an N-terminal transit peptide but none has been predicted.</text>
</comment>
<comment type="similarity">
    <text evidence="1">Belongs to the radical SAM superfamily. Lipoyl synthase family.</text>
</comment>
<name>LIPA_LEIIN</name>